<dbReference type="EC" id="3.2.1.21"/>
<dbReference type="EMBL" id="X15644">
    <property type="protein sequence ID" value="CAA33665.1"/>
    <property type="molecule type" value="Genomic_DNA"/>
</dbReference>
<dbReference type="EMBL" id="CP000568">
    <property type="protein sequence ID" value="ABN52488.1"/>
    <property type="molecule type" value="Genomic_DNA"/>
</dbReference>
<dbReference type="PIR" id="S04381">
    <property type="entry name" value="S04381"/>
</dbReference>
<dbReference type="RefSeq" id="WP_003517480.1">
    <property type="nucleotide sequence ID" value="NC_009012.1"/>
</dbReference>
<dbReference type="PDB" id="7MS2">
    <property type="method" value="X-ray"/>
    <property type="resolution" value="2.04 A"/>
    <property type="chains" value="A/B=1-755"/>
</dbReference>
<dbReference type="PDBsum" id="7MS2"/>
<dbReference type="SMR" id="P14002"/>
<dbReference type="STRING" id="203119.Cthe_1256"/>
<dbReference type="CAZy" id="GH3">
    <property type="family name" value="Glycoside Hydrolase Family 3"/>
</dbReference>
<dbReference type="GeneID" id="35805818"/>
<dbReference type="KEGG" id="cth:Cthe_1256"/>
<dbReference type="eggNOG" id="COG1472">
    <property type="taxonomic scope" value="Bacteria"/>
</dbReference>
<dbReference type="HOGENOM" id="CLU_004542_4_1_9"/>
<dbReference type="OrthoDB" id="98455at2"/>
<dbReference type="UniPathway" id="UPA00696"/>
<dbReference type="Proteomes" id="UP000002145">
    <property type="component" value="Chromosome"/>
</dbReference>
<dbReference type="GO" id="GO:0008422">
    <property type="term" value="F:beta-glucosidase activity"/>
    <property type="evidence" value="ECO:0007669"/>
    <property type="project" value="UniProtKB-EC"/>
</dbReference>
<dbReference type="GO" id="GO:0030245">
    <property type="term" value="P:cellulose catabolic process"/>
    <property type="evidence" value="ECO:0007669"/>
    <property type="project" value="UniProtKB-UniPathway"/>
</dbReference>
<dbReference type="FunFam" id="2.60.40.10:FF:000495">
    <property type="entry name" value="Periplasmic beta-glucosidase"/>
    <property type="match status" value="1"/>
</dbReference>
<dbReference type="Gene3D" id="3.40.50.1700">
    <property type="entry name" value="Glycoside hydrolase family 3 C-terminal domain"/>
    <property type="match status" value="1"/>
</dbReference>
<dbReference type="Gene3D" id="3.20.20.300">
    <property type="entry name" value="Glycoside hydrolase, family 3, N-terminal domain"/>
    <property type="match status" value="1"/>
</dbReference>
<dbReference type="Gene3D" id="2.60.40.10">
    <property type="entry name" value="Immunoglobulins"/>
    <property type="match status" value="1"/>
</dbReference>
<dbReference type="InterPro" id="IPR050288">
    <property type="entry name" value="Cellulose_deg_GH3"/>
</dbReference>
<dbReference type="InterPro" id="IPR026891">
    <property type="entry name" value="Fn3-like"/>
</dbReference>
<dbReference type="InterPro" id="IPR019800">
    <property type="entry name" value="Glyco_hydro_3_AS"/>
</dbReference>
<dbReference type="InterPro" id="IPR002772">
    <property type="entry name" value="Glyco_hydro_3_C"/>
</dbReference>
<dbReference type="InterPro" id="IPR036881">
    <property type="entry name" value="Glyco_hydro_3_C_sf"/>
</dbReference>
<dbReference type="InterPro" id="IPR001764">
    <property type="entry name" value="Glyco_hydro_3_N"/>
</dbReference>
<dbReference type="InterPro" id="IPR036962">
    <property type="entry name" value="Glyco_hydro_3_N_sf"/>
</dbReference>
<dbReference type="InterPro" id="IPR017853">
    <property type="entry name" value="Glycoside_hydrolase_SF"/>
</dbReference>
<dbReference type="InterPro" id="IPR013783">
    <property type="entry name" value="Ig-like_fold"/>
</dbReference>
<dbReference type="PANTHER" id="PTHR42715">
    <property type="entry name" value="BETA-GLUCOSIDASE"/>
    <property type="match status" value="1"/>
</dbReference>
<dbReference type="PANTHER" id="PTHR42715:SF10">
    <property type="entry name" value="BETA-GLUCOSIDASE"/>
    <property type="match status" value="1"/>
</dbReference>
<dbReference type="Pfam" id="PF14310">
    <property type="entry name" value="Fn3-like"/>
    <property type="match status" value="1"/>
</dbReference>
<dbReference type="Pfam" id="PF00933">
    <property type="entry name" value="Glyco_hydro_3"/>
    <property type="match status" value="1"/>
</dbReference>
<dbReference type="Pfam" id="PF01915">
    <property type="entry name" value="Glyco_hydro_3_C"/>
    <property type="match status" value="1"/>
</dbReference>
<dbReference type="PRINTS" id="PR00133">
    <property type="entry name" value="GLHYDRLASE3"/>
</dbReference>
<dbReference type="SMART" id="SM01217">
    <property type="entry name" value="Fn3_like"/>
    <property type="match status" value="1"/>
</dbReference>
<dbReference type="SUPFAM" id="SSF51445">
    <property type="entry name" value="(Trans)glycosidases"/>
    <property type="match status" value="1"/>
</dbReference>
<dbReference type="SUPFAM" id="SSF52279">
    <property type="entry name" value="Beta-D-glucan exohydrolase, C-terminal domain"/>
    <property type="match status" value="1"/>
</dbReference>
<dbReference type="PROSITE" id="PS00775">
    <property type="entry name" value="GLYCOSYL_HYDROL_F3"/>
    <property type="match status" value="1"/>
</dbReference>
<feature type="chain" id="PRO_0000210778" description="Thermostable beta-glucosidase B">
    <location>
        <begin position="1"/>
        <end position="755"/>
    </location>
</feature>
<feature type="active site" evidence="1">
    <location>
        <position position="231"/>
    </location>
</feature>
<feature type="sequence conflict" description="In Ref. 1; CAA33665." evidence="2" ref="1">
    <original>S</original>
    <variation>P</variation>
    <location>
        <position position="125"/>
    </location>
</feature>
<feature type="sequence conflict" description="In Ref. 1; CAA33665." evidence="2" ref="1">
    <original>F</original>
    <variation>I</variation>
    <location>
        <position position="287"/>
    </location>
</feature>
<feature type="sequence conflict" description="In Ref. 1; CAA33665." evidence="2" ref="1">
    <original>DK</original>
    <variation>EQ</variation>
    <location>
        <begin position="300"/>
        <end position="301"/>
    </location>
</feature>
<feature type="sequence conflict" description="In Ref. 1; CAA33665." evidence="2" ref="1">
    <original>G</original>
    <variation>A</variation>
    <location>
        <position position="371"/>
    </location>
</feature>
<feature type="sequence conflict" description="In Ref. 1; CAA33665." evidence="2" ref="1">
    <original>ALADVLFGEVNPS</original>
    <variation>RWRMCYSVKSIV</variation>
    <location>
        <begin position="481"/>
        <end position="493"/>
    </location>
</feature>
<feature type="helix" evidence="3">
    <location>
        <begin position="2"/>
        <end position="11"/>
    </location>
</feature>
<feature type="helix" evidence="3">
    <location>
        <begin position="14"/>
        <end position="20"/>
    </location>
</feature>
<feature type="strand" evidence="3">
    <location>
        <begin position="22"/>
        <end position="29"/>
    </location>
</feature>
<feature type="helix" evidence="3">
    <location>
        <begin position="33"/>
        <end position="35"/>
    </location>
</feature>
<feature type="strand" evidence="3">
    <location>
        <begin position="41"/>
        <end position="44"/>
    </location>
</feature>
<feature type="helix" evidence="3">
    <location>
        <begin position="73"/>
        <end position="76"/>
    </location>
</feature>
<feature type="helix" evidence="3">
    <location>
        <begin position="77"/>
        <end position="79"/>
    </location>
</feature>
<feature type="helix" evidence="3">
    <location>
        <begin position="82"/>
        <end position="98"/>
    </location>
</feature>
<feature type="strand" evidence="3">
    <location>
        <begin position="102"/>
        <end position="104"/>
    </location>
</feature>
<feature type="helix" evidence="3">
    <location>
        <begin position="120"/>
        <end position="122"/>
    </location>
</feature>
<feature type="helix" evidence="3">
    <location>
        <begin position="128"/>
        <end position="144"/>
    </location>
</feature>
<feature type="strand" evidence="3">
    <location>
        <begin position="148"/>
        <end position="154"/>
    </location>
</feature>
<feature type="turn" evidence="3">
    <location>
        <begin position="161"/>
        <end position="165"/>
    </location>
</feature>
<feature type="strand" evidence="3">
    <location>
        <begin position="167"/>
        <end position="169"/>
    </location>
</feature>
<feature type="helix" evidence="3">
    <location>
        <begin position="172"/>
        <end position="177"/>
    </location>
</feature>
<feature type="helix" evidence="3">
    <location>
        <begin position="179"/>
        <end position="190"/>
    </location>
</feature>
<feature type="strand" evidence="3">
    <location>
        <begin position="193"/>
        <end position="197"/>
    </location>
</feature>
<feature type="strand" evidence="3">
    <location>
        <begin position="199"/>
        <end position="202"/>
    </location>
</feature>
<feature type="helix" evidence="3">
    <location>
        <begin position="207"/>
        <end position="209"/>
    </location>
</feature>
<feature type="helix" evidence="3">
    <location>
        <begin position="211"/>
        <end position="214"/>
    </location>
</feature>
<feature type="helix" evidence="3">
    <location>
        <begin position="215"/>
        <end position="221"/>
    </location>
</feature>
<feature type="strand" evidence="3">
    <location>
        <begin position="226"/>
        <end position="229"/>
    </location>
</feature>
<feature type="helix" evidence="3">
    <location>
        <begin position="238"/>
        <end position="244"/>
    </location>
</feature>
<feature type="strand" evidence="3">
    <location>
        <begin position="248"/>
        <end position="251"/>
    </location>
</feature>
<feature type="helix" evidence="3">
    <location>
        <begin position="256"/>
        <end position="266"/>
    </location>
</feature>
<feature type="helix" evidence="3">
    <location>
        <begin position="272"/>
        <end position="291"/>
    </location>
</feature>
<feature type="helix" evidence="3">
    <location>
        <begin position="301"/>
        <end position="313"/>
    </location>
</feature>
<feature type="strand" evidence="3">
    <location>
        <begin position="317"/>
        <end position="321"/>
    </location>
</feature>
<feature type="helix" evidence="3">
    <location>
        <begin position="322"/>
        <end position="324"/>
    </location>
</feature>
<feature type="strand" evidence="3">
    <location>
        <begin position="330"/>
        <end position="338"/>
    </location>
</feature>
<feature type="helix" evidence="3">
    <location>
        <begin position="339"/>
        <end position="342"/>
    </location>
</feature>
<feature type="helix" evidence="3">
    <location>
        <begin position="362"/>
        <end position="370"/>
    </location>
</feature>
<feature type="strand" evidence="3">
    <location>
        <begin position="375"/>
        <end position="379"/>
    </location>
</feature>
<feature type="helix" evidence="3">
    <location>
        <begin position="391"/>
        <end position="403"/>
    </location>
</feature>
<feature type="strand" evidence="3">
    <location>
        <begin position="404"/>
        <end position="412"/>
    </location>
</feature>
<feature type="helix" evidence="3">
    <location>
        <begin position="415"/>
        <end position="417"/>
    </location>
</feature>
<feature type="helix" evidence="3">
    <location>
        <begin position="431"/>
        <end position="443"/>
    </location>
</feature>
<feature type="strand" evidence="3">
    <location>
        <begin position="445"/>
        <end position="452"/>
    </location>
</feature>
<feature type="helix" evidence="3">
    <location>
        <begin position="462"/>
        <end position="464"/>
    </location>
</feature>
<feature type="strand" evidence="3">
    <location>
        <begin position="466"/>
        <end position="470"/>
    </location>
</feature>
<feature type="helix" evidence="3">
    <location>
        <begin position="478"/>
        <end position="486"/>
    </location>
</feature>
<feature type="helix" evidence="3">
    <location>
        <begin position="504"/>
        <end position="506"/>
    </location>
</feature>
<feature type="helix" evidence="3">
    <location>
        <begin position="510"/>
        <end position="512"/>
    </location>
</feature>
<feature type="strand" evidence="3">
    <location>
        <begin position="516"/>
        <end position="521"/>
    </location>
</feature>
<feature type="turn" evidence="3">
    <location>
        <begin position="523"/>
        <end position="526"/>
    </location>
</feature>
<feature type="helix" evidence="3">
    <location>
        <begin position="530"/>
        <end position="536"/>
    </location>
</feature>
<feature type="strand" evidence="3">
    <location>
        <begin position="553"/>
        <end position="561"/>
    </location>
</feature>
<feature type="strand" evidence="3">
    <location>
        <begin position="563"/>
        <end position="565"/>
    </location>
</feature>
<feature type="strand" evidence="3">
    <location>
        <begin position="571"/>
        <end position="579"/>
    </location>
</feature>
<feature type="strand" evidence="3">
    <location>
        <begin position="581"/>
        <end position="583"/>
    </location>
</feature>
<feature type="strand" evidence="3">
    <location>
        <begin position="585"/>
        <end position="597"/>
    </location>
</feature>
<feature type="strand" evidence="3">
    <location>
        <begin position="606"/>
        <end position="615"/>
    </location>
</feature>
<feature type="strand" evidence="3">
    <location>
        <begin position="620"/>
        <end position="627"/>
    </location>
</feature>
<feature type="turn" evidence="3">
    <location>
        <begin position="630"/>
        <end position="632"/>
    </location>
</feature>
<feature type="strand" evidence="3">
    <location>
        <begin position="634"/>
        <end position="636"/>
    </location>
</feature>
<feature type="turn" evidence="3">
    <location>
        <begin position="637"/>
        <end position="640"/>
    </location>
</feature>
<feature type="strand" evidence="3">
    <location>
        <begin position="641"/>
        <end position="643"/>
    </location>
</feature>
<feature type="strand" evidence="3">
    <location>
        <begin position="646"/>
        <end position="656"/>
    </location>
</feature>
<feature type="strand" evidence="3">
    <location>
        <begin position="660"/>
        <end position="668"/>
    </location>
</feature>
<feature type="helix" evidence="3">
    <location>
        <begin position="684"/>
        <end position="687"/>
    </location>
</feature>
<feature type="helix" evidence="3">
    <location>
        <begin position="691"/>
        <end position="707"/>
    </location>
</feature>
<feature type="helix" evidence="3">
    <location>
        <begin position="718"/>
        <end position="725"/>
    </location>
</feature>
<feature type="helix" evidence="3">
    <location>
        <begin position="728"/>
        <end position="735"/>
    </location>
</feature>
<feature type="helix" evidence="3">
    <location>
        <begin position="738"/>
        <end position="749"/>
    </location>
</feature>
<keyword id="KW-0002">3D-structure</keyword>
<keyword id="KW-0119">Carbohydrate metabolism</keyword>
<keyword id="KW-0136">Cellulose degradation</keyword>
<keyword id="KW-0903">Direct protein sequencing</keyword>
<keyword id="KW-0326">Glycosidase</keyword>
<keyword id="KW-0378">Hydrolase</keyword>
<keyword id="KW-0624">Polysaccharide degradation</keyword>
<keyword id="KW-1185">Reference proteome</keyword>
<comment type="catalytic activity">
    <reaction>
        <text>Hydrolysis of terminal, non-reducing beta-D-glucosyl residues with release of beta-D-glucose.</text>
        <dbReference type="EC" id="3.2.1.21"/>
    </reaction>
</comment>
<comment type="pathway">
    <text>Glycan metabolism; cellulose degradation.</text>
</comment>
<comment type="similarity">
    <text evidence="2">Belongs to the glycosyl hydrolase 3 family.</text>
</comment>
<proteinExistence type="evidence at protein level"/>
<evidence type="ECO:0000250" key="1"/>
<evidence type="ECO:0000305" key="2"/>
<evidence type="ECO:0007829" key="3">
    <source>
        <dbReference type="PDB" id="7MS2"/>
    </source>
</evidence>
<protein>
    <recommendedName>
        <fullName>Thermostable beta-glucosidase B</fullName>
        <ecNumber>3.2.1.21</ecNumber>
    </recommendedName>
    <alternativeName>
        <fullName>Beta-D-glucoside glucohydrolase</fullName>
    </alternativeName>
    <alternativeName>
        <fullName>Cellobiase</fullName>
    </alternativeName>
    <alternativeName>
        <fullName>Gentiobiase</fullName>
    </alternativeName>
</protein>
<sequence length="755" mass="83900">MAVDIKKIIKQMTLEEKAGLCSGLDFWHTKPVERLGIPSIMMTDGPHGLRKQREDAEIADINNSVPATCFPSAAGLACSWDRELVERVGAALGEECQAENVSILLGPGANIKRSPLCGRNFEYFSEDPYLSSELAASHIKGVQSQGVGACLKHFAANNQEHRRMTVDTIVDERTLREIYFASFENAVKKARPWVVMCAYNKLNGEYCSENRYLLTEVLKNEWMHDGFVVSDWGAVNDRVSGLDAGLDLEMPTSHGITDKKIVEAVKSGKLSENILNRAVERILKVIFMALENKKENAQYDKDAHHRLARQAAAESMVLLKNEDDVLPLKKSGTIALIGAFVKKPRYQGSGSSHITPTRLDDIYEEIKKAGGDKVNLVYSEGYRLENDGIDEELINEAKKAASSSDVAVVFAGLPDEYESEGFDRTHMSIPENQNRLIEAVAEVQSNIVVVLLNGSPVEMPWIDKVKSVLEAYLGGQALGGALADVLFGEVNPSGKLAETFPVKLSHNPSYLNFPGEDDRVEYKEGLFVGYRYYDTKGIEPLFPFGHGLSYTKFEYSDISVDKKDVSDNSIINVSVKVKNVGKMAGKEIVQLYVKDVKSSVRRPEKELKGFEKVFLNPGEEKTVTFTLDKRAFAYYNTQIKDWHVESGEFLILIGRSSRDIVLKESVRVNSTVKIRKRFTVNSAVEDVMSDSSAAAVLGPVLKEITDALQIDMDNAHDMMAANIKNMPLRSLVGYSQGRLSEEMLEELVDKINNVE</sequence>
<accession>P14002</accession>
<accession>A3DEV9</accession>
<name>BGLB_ACET2</name>
<organism>
    <name type="scientific">Acetivibrio thermocellus (strain ATCC 27405 / DSM 1237 / JCM 9322 / NBRC 103400 / NCIMB 10682 / NRRL B-4536 / VPI 7372)</name>
    <name type="common">Clostridium thermocellum</name>
    <dbReference type="NCBI Taxonomy" id="203119"/>
    <lineage>
        <taxon>Bacteria</taxon>
        <taxon>Bacillati</taxon>
        <taxon>Bacillota</taxon>
        <taxon>Clostridia</taxon>
        <taxon>Eubacteriales</taxon>
        <taxon>Oscillospiraceae</taxon>
        <taxon>Acetivibrio</taxon>
    </lineage>
</organism>
<gene>
    <name type="primary">bglB</name>
    <name type="ordered locus">Cthe_1256</name>
</gene>
<reference key="1">
    <citation type="journal article" date="1989" name="Mol. Gen. Genet.">
        <title>Nucleotide sequence of the Clostridium thermocellum bgIB gene encoding thermostable beta-glucosidase B: homology to fungal beta-glucosidases.</title>
        <authorList>
            <person name="Graebnitz F."/>
            <person name="Ruecknagel K.P."/>
            <person name="Seiss M."/>
            <person name="Staudenbauer W.L."/>
        </authorList>
    </citation>
    <scope>NUCLEOTIDE SEQUENCE [GENOMIC DNA]</scope>
    <scope>PARTIAL PROTEIN SEQUENCE</scope>
</reference>
<reference key="2">
    <citation type="submission" date="2007-02" db="EMBL/GenBank/DDBJ databases">
        <title>Complete sequence of Clostridium thermocellum ATCC 27405.</title>
        <authorList>
            <consortium name="US DOE Joint Genome Institute"/>
            <person name="Copeland A."/>
            <person name="Lucas S."/>
            <person name="Lapidus A."/>
            <person name="Barry K."/>
            <person name="Detter J.C."/>
            <person name="Glavina del Rio T."/>
            <person name="Hammon N."/>
            <person name="Israni S."/>
            <person name="Dalin E."/>
            <person name="Tice H."/>
            <person name="Pitluck S."/>
            <person name="Chertkov O."/>
            <person name="Brettin T."/>
            <person name="Bruce D."/>
            <person name="Han C."/>
            <person name="Tapia R."/>
            <person name="Gilna P."/>
            <person name="Schmutz J."/>
            <person name="Larimer F."/>
            <person name="Land M."/>
            <person name="Hauser L."/>
            <person name="Kyrpides N."/>
            <person name="Mikhailova N."/>
            <person name="Wu J.H.D."/>
            <person name="Newcomb M."/>
            <person name="Richardson P."/>
        </authorList>
    </citation>
    <scope>NUCLEOTIDE SEQUENCE [LARGE SCALE GENOMIC DNA]</scope>
    <source>
        <strain>ATCC 27405 / DSM 1237 / JCM 9322 / NBRC 103400 / NCIMB 10682 / NRRL B-4536 / VPI 7372</strain>
    </source>
</reference>